<accession>B7HJ05</accession>
<gene>
    <name evidence="1" type="primary">coaX</name>
    <name type="ordered locus">BCB4264_A0073</name>
</gene>
<proteinExistence type="inferred from homology"/>
<organism>
    <name type="scientific">Bacillus cereus (strain B4264)</name>
    <dbReference type="NCBI Taxonomy" id="405532"/>
    <lineage>
        <taxon>Bacteria</taxon>
        <taxon>Bacillati</taxon>
        <taxon>Bacillota</taxon>
        <taxon>Bacilli</taxon>
        <taxon>Bacillales</taxon>
        <taxon>Bacillaceae</taxon>
        <taxon>Bacillus</taxon>
        <taxon>Bacillus cereus group</taxon>
    </lineage>
</organism>
<dbReference type="EC" id="2.7.1.33" evidence="1"/>
<dbReference type="EMBL" id="CP001176">
    <property type="protein sequence ID" value="ACK60268.1"/>
    <property type="molecule type" value="Genomic_DNA"/>
</dbReference>
<dbReference type="RefSeq" id="WP_000578368.1">
    <property type="nucleotide sequence ID" value="NZ_VEHB01000020.1"/>
</dbReference>
<dbReference type="SMR" id="B7HJ05"/>
<dbReference type="KEGG" id="bcb:BCB4264_A0073"/>
<dbReference type="HOGENOM" id="CLU_066627_1_0_9"/>
<dbReference type="UniPathway" id="UPA00241">
    <property type="reaction ID" value="UER00352"/>
</dbReference>
<dbReference type="Proteomes" id="UP000007096">
    <property type="component" value="Chromosome"/>
</dbReference>
<dbReference type="GO" id="GO:0005737">
    <property type="term" value="C:cytoplasm"/>
    <property type="evidence" value="ECO:0007669"/>
    <property type="project" value="UniProtKB-SubCell"/>
</dbReference>
<dbReference type="GO" id="GO:0005524">
    <property type="term" value="F:ATP binding"/>
    <property type="evidence" value="ECO:0007669"/>
    <property type="project" value="UniProtKB-UniRule"/>
</dbReference>
<dbReference type="GO" id="GO:0046872">
    <property type="term" value="F:metal ion binding"/>
    <property type="evidence" value="ECO:0007669"/>
    <property type="project" value="UniProtKB-KW"/>
</dbReference>
<dbReference type="GO" id="GO:0004594">
    <property type="term" value="F:pantothenate kinase activity"/>
    <property type="evidence" value="ECO:0007669"/>
    <property type="project" value="UniProtKB-UniRule"/>
</dbReference>
<dbReference type="GO" id="GO:0015937">
    <property type="term" value="P:coenzyme A biosynthetic process"/>
    <property type="evidence" value="ECO:0007669"/>
    <property type="project" value="UniProtKB-UniRule"/>
</dbReference>
<dbReference type="CDD" id="cd24015">
    <property type="entry name" value="ASKHA_NBD_PanK-III"/>
    <property type="match status" value="1"/>
</dbReference>
<dbReference type="Gene3D" id="3.30.420.40">
    <property type="match status" value="2"/>
</dbReference>
<dbReference type="HAMAP" id="MF_01274">
    <property type="entry name" value="Pantothen_kinase_3"/>
    <property type="match status" value="1"/>
</dbReference>
<dbReference type="InterPro" id="IPR043129">
    <property type="entry name" value="ATPase_NBD"/>
</dbReference>
<dbReference type="InterPro" id="IPR004619">
    <property type="entry name" value="Type_III_PanK"/>
</dbReference>
<dbReference type="NCBIfam" id="TIGR00671">
    <property type="entry name" value="baf"/>
    <property type="match status" value="1"/>
</dbReference>
<dbReference type="NCBIfam" id="NF009843">
    <property type="entry name" value="PRK13318.1-1"/>
    <property type="match status" value="1"/>
</dbReference>
<dbReference type="NCBIfam" id="NF009847">
    <property type="entry name" value="PRK13318.1-5"/>
    <property type="match status" value="1"/>
</dbReference>
<dbReference type="NCBIfam" id="NF009848">
    <property type="entry name" value="PRK13318.1-6"/>
    <property type="match status" value="1"/>
</dbReference>
<dbReference type="NCBIfam" id="NF009855">
    <property type="entry name" value="PRK13321.1"/>
    <property type="match status" value="1"/>
</dbReference>
<dbReference type="PANTHER" id="PTHR34265">
    <property type="entry name" value="TYPE III PANTOTHENATE KINASE"/>
    <property type="match status" value="1"/>
</dbReference>
<dbReference type="PANTHER" id="PTHR34265:SF1">
    <property type="entry name" value="TYPE III PANTOTHENATE KINASE"/>
    <property type="match status" value="1"/>
</dbReference>
<dbReference type="Pfam" id="PF03309">
    <property type="entry name" value="Pan_kinase"/>
    <property type="match status" value="1"/>
</dbReference>
<dbReference type="SUPFAM" id="SSF53067">
    <property type="entry name" value="Actin-like ATPase domain"/>
    <property type="match status" value="2"/>
</dbReference>
<keyword id="KW-0067">ATP-binding</keyword>
<keyword id="KW-0173">Coenzyme A biosynthesis</keyword>
<keyword id="KW-0963">Cytoplasm</keyword>
<keyword id="KW-0418">Kinase</keyword>
<keyword id="KW-0479">Metal-binding</keyword>
<keyword id="KW-0547">Nucleotide-binding</keyword>
<keyword id="KW-0630">Potassium</keyword>
<keyword id="KW-0808">Transferase</keyword>
<evidence type="ECO:0000255" key="1">
    <source>
        <dbReference type="HAMAP-Rule" id="MF_01274"/>
    </source>
</evidence>
<reference key="1">
    <citation type="submission" date="2008-10" db="EMBL/GenBank/DDBJ databases">
        <title>Genome sequence of Bacillus cereus B4264.</title>
        <authorList>
            <person name="Dodson R.J."/>
            <person name="Durkin A.S."/>
            <person name="Rosovitz M.J."/>
            <person name="Rasko D.A."/>
            <person name="Hoffmaster A."/>
            <person name="Ravel J."/>
            <person name="Sutton G."/>
        </authorList>
    </citation>
    <scope>NUCLEOTIDE SEQUENCE [LARGE SCALE GENOMIC DNA]</scope>
    <source>
        <strain>B4264</strain>
    </source>
</reference>
<protein>
    <recommendedName>
        <fullName evidence="1">Type III pantothenate kinase</fullName>
        <ecNumber evidence="1">2.7.1.33</ecNumber>
    </recommendedName>
    <alternativeName>
        <fullName evidence="1">PanK-III</fullName>
    </alternativeName>
    <alternativeName>
        <fullName evidence="1">Pantothenic acid kinase</fullName>
    </alternativeName>
</protein>
<comment type="function">
    <text evidence="1">Catalyzes the phosphorylation of pantothenate (Pan), the first step in CoA biosynthesis.</text>
</comment>
<comment type="catalytic activity">
    <reaction evidence="1">
        <text>(R)-pantothenate + ATP = (R)-4'-phosphopantothenate + ADP + H(+)</text>
        <dbReference type="Rhea" id="RHEA:16373"/>
        <dbReference type="ChEBI" id="CHEBI:10986"/>
        <dbReference type="ChEBI" id="CHEBI:15378"/>
        <dbReference type="ChEBI" id="CHEBI:29032"/>
        <dbReference type="ChEBI" id="CHEBI:30616"/>
        <dbReference type="ChEBI" id="CHEBI:456216"/>
        <dbReference type="EC" id="2.7.1.33"/>
    </reaction>
</comment>
<comment type="cofactor">
    <cofactor evidence="1">
        <name>NH4(+)</name>
        <dbReference type="ChEBI" id="CHEBI:28938"/>
    </cofactor>
    <cofactor evidence="1">
        <name>K(+)</name>
        <dbReference type="ChEBI" id="CHEBI:29103"/>
    </cofactor>
    <text evidence="1">A monovalent cation. Ammonium or potassium.</text>
</comment>
<comment type="pathway">
    <text evidence="1">Cofactor biosynthesis; coenzyme A biosynthesis; CoA from (R)-pantothenate: step 1/5.</text>
</comment>
<comment type="subunit">
    <text evidence="1">Homodimer.</text>
</comment>
<comment type="subcellular location">
    <subcellularLocation>
        <location evidence="1">Cytoplasm</location>
    </subcellularLocation>
</comment>
<comment type="similarity">
    <text evidence="1">Belongs to the type III pantothenate kinase family.</text>
</comment>
<feature type="chain" id="PRO_1000140220" description="Type III pantothenate kinase">
    <location>
        <begin position="1"/>
        <end position="262"/>
    </location>
</feature>
<feature type="active site" description="Proton acceptor" evidence="1">
    <location>
        <position position="109"/>
    </location>
</feature>
<feature type="binding site" evidence="1">
    <location>
        <begin position="6"/>
        <end position="13"/>
    </location>
    <ligand>
        <name>ATP</name>
        <dbReference type="ChEBI" id="CHEBI:30616"/>
    </ligand>
</feature>
<feature type="binding site" evidence="1">
    <location>
        <position position="100"/>
    </location>
    <ligand>
        <name>substrate</name>
    </ligand>
</feature>
<feature type="binding site" evidence="1">
    <location>
        <begin position="107"/>
        <end position="110"/>
    </location>
    <ligand>
        <name>substrate</name>
    </ligand>
</feature>
<feature type="binding site" evidence="1">
    <location>
        <position position="129"/>
    </location>
    <ligand>
        <name>K(+)</name>
        <dbReference type="ChEBI" id="CHEBI:29103"/>
    </ligand>
</feature>
<feature type="binding site" evidence="1">
    <location>
        <position position="132"/>
    </location>
    <ligand>
        <name>ATP</name>
        <dbReference type="ChEBI" id="CHEBI:30616"/>
    </ligand>
</feature>
<feature type="binding site" evidence="1">
    <location>
        <position position="184"/>
    </location>
    <ligand>
        <name>substrate</name>
    </ligand>
</feature>
<sequence length="262" mass="29136">MIFVLDVGNTNAVLGVFEEGELRQHWRMETDRHKTEDEYGMLVKQLLEHEGLSFEDVKGIIVSSVVPPIMFALERMCEKYFKIKPLVVGPGIKTGLNIKYENPREVGADRIVNAVAGIHLYGSPLIIVDFGTATTYCYINEEKHYMGGVITPGIMISAEALYSRAAKLPRIEITKPSSVVGKNTVSAMQSGILYGYVGQVEGIVKRMKEEARQEPKVIATGGLAKLISEESNVIDIVDPFLTLKGLYMLYERNANLQHEKGE</sequence>
<name>COAX_BACC4</name>